<keyword id="KW-0025">Alternative splicing</keyword>
<keyword id="KW-1015">Disulfide bond</keyword>
<keyword id="KW-0325">Glycoprotein</keyword>
<keyword id="KW-0328">Glycosyltransferase</keyword>
<keyword id="KW-0333">Golgi apparatus</keyword>
<keyword id="KW-0443">Lipid metabolism</keyword>
<keyword id="KW-0472">Membrane</keyword>
<keyword id="KW-1267">Proteomics identification</keyword>
<keyword id="KW-1185">Reference proteome</keyword>
<keyword id="KW-0735">Signal-anchor</keyword>
<keyword id="KW-0808">Transferase</keyword>
<keyword id="KW-0812">Transmembrane</keyword>
<keyword id="KW-1133">Transmembrane helix</keyword>
<name>SIA8E_HUMAN</name>
<reference key="1">
    <citation type="journal article" date="1997" name="Biochem. Biophys. Res. Commun.">
        <title>Molecular cloning and expression of human alpha2,8-sialyltransferase (hST8Sia V).</title>
        <authorList>
            <person name="Kim Y.-J."/>
            <person name="Kim K.-S."/>
            <person name="Do S.-I."/>
            <person name="Kim C.-H."/>
            <person name="Kim S.-K."/>
            <person name="Lee Y.-C."/>
        </authorList>
    </citation>
    <scope>NUCLEOTIDE SEQUENCE [MRNA] (ISOFORM 1)</scope>
    <scope>FUNCTION</scope>
    <scope>TISSUE SPECIFICITY</scope>
    <scope>CATALYTIC ACTIVITY</scope>
    <scope>PATHWAY</scope>
    <source>
        <tissue>Brain</tissue>
    </source>
</reference>
<reference key="2">
    <citation type="journal article" date="2004" name="Nat. Genet.">
        <title>Complete sequencing and characterization of 21,243 full-length human cDNAs.</title>
        <authorList>
            <person name="Ota T."/>
            <person name="Suzuki Y."/>
            <person name="Nishikawa T."/>
            <person name="Otsuki T."/>
            <person name="Sugiyama T."/>
            <person name="Irie R."/>
            <person name="Wakamatsu A."/>
            <person name="Hayashi K."/>
            <person name="Sato H."/>
            <person name="Nagai K."/>
            <person name="Kimura K."/>
            <person name="Makita H."/>
            <person name="Sekine M."/>
            <person name="Obayashi M."/>
            <person name="Nishi T."/>
            <person name="Shibahara T."/>
            <person name="Tanaka T."/>
            <person name="Ishii S."/>
            <person name="Yamamoto J."/>
            <person name="Saito K."/>
            <person name="Kawai Y."/>
            <person name="Isono Y."/>
            <person name="Nakamura Y."/>
            <person name="Nagahari K."/>
            <person name="Murakami K."/>
            <person name="Yasuda T."/>
            <person name="Iwayanagi T."/>
            <person name="Wagatsuma M."/>
            <person name="Shiratori A."/>
            <person name="Sudo H."/>
            <person name="Hosoiri T."/>
            <person name="Kaku Y."/>
            <person name="Kodaira H."/>
            <person name="Kondo H."/>
            <person name="Sugawara M."/>
            <person name="Takahashi M."/>
            <person name="Kanda K."/>
            <person name="Yokoi T."/>
            <person name="Furuya T."/>
            <person name="Kikkawa E."/>
            <person name="Omura Y."/>
            <person name="Abe K."/>
            <person name="Kamihara K."/>
            <person name="Katsuta N."/>
            <person name="Sato K."/>
            <person name="Tanikawa M."/>
            <person name="Yamazaki M."/>
            <person name="Ninomiya K."/>
            <person name="Ishibashi T."/>
            <person name="Yamashita H."/>
            <person name="Murakawa K."/>
            <person name="Fujimori K."/>
            <person name="Tanai H."/>
            <person name="Kimata M."/>
            <person name="Watanabe M."/>
            <person name="Hiraoka S."/>
            <person name="Chiba Y."/>
            <person name="Ishida S."/>
            <person name="Ono Y."/>
            <person name="Takiguchi S."/>
            <person name="Watanabe S."/>
            <person name="Yosida M."/>
            <person name="Hotuta T."/>
            <person name="Kusano J."/>
            <person name="Kanehori K."/>
            <person name="Takahashi-Fujii A."/>
            <person name="Hara H."/>
            <person name="Tanase T.-O."/>
            <person name="Nomura Y."/>
            <person name="Togiya S."/>
            <person name="Komai F."/>
            <person name="Hara R."/>
            <person name="Takeuchi K."/>
            <person name="Arita M."/>
            <person name="Imose N."/>
            <person name="Musashino K."/>
            <person name="Yuuki H."/>
            <person name="Oshima A."/>
            <person name="Sasaki N."/>
            <person name="Aotsuka S."/>
            <person name="Yoshikawa Y."/>
            <person name="Matsunawa H."/>
            <person name="Ichihara T."/>
            <person name="Shiohata N."/>
            <person name="Sano S."/>
            <person name="Moriya S."/>
            <person name="Momiyama H."/>
            <person name="Satoh N."/>
            <person name="Takami S."/>
            <person name="Terashima Y."/>
            <person name="Suzuki O."/>
            <person name="Nakagawa S."/>
            <person name="Senoh A."/>
            <person name="Mizoguchi H."/>
            <person name="Goto Y."/>
            <person name="Shimizu F."/>
            <person name="Wakebe H."/>
            <person name="Hishigaki H."/>
            <person name="Watanabe T."/>
            <person name="Sugiyama A."/>
            <person name="Takemoto M."/>
            <person name="Kawakami B."/>
            <person name="Yamazaki M."/>
            <person name="Watanabe K."/>
            <person name="Kumagai A."/>
            <person name="Itakura S."/>
            <person name="Fukuzumi Y."/>
            <person name="Fujimori Y."/>
            <person name="Komiyama M."/>
            <person name="Tashiro H."/>
            <person name="Tanigami A."/>
            <person name="Fujiwara T."/>
            <person name="Ono T."/>
            <person name="Yamada K."/>
            <person name="Fujii Y."/>
            <person name="Ozaki K."/>
            <person name="Hirao M."/>
            <person name="Ohmori Y."/>
            <person name="Kawabata A."/>
            <person name="Hikiji T."/>
            <person name="Kobatake N."/>
            <person name="Inagaki H."/>
            <person name="Ikema Y."/>
            <person name="Okamoto S."/>
            <person name="Okitani R."/>
            <person name="Kawakami T."/>
            <person name="Noguchi S."/>
            <person name="Itoh T."/>
            <person name="Shigeta K."/>
            <person name="Senba T."/>
            <person name="Matsumura K."/>
            <person name="Nakajima Y."/>
            <person name="Mizuno T."/>
            <person name="Morinaga M."/>
            <person name="Sasaki M."/>
            <person name="Togashi T."/>
            <person name="Oyama M."/>
            <person name="Hata H."/>
            <person name="Watanabe M."/>
            <person name="Komatsu T."/>
            <person name="Mizushima-Sugano J."/>
            <person name="Satoh T."/>
            <person name="Shirai Y."/>
            <person name="Takahashi Y."/>
            <person name="Nakagawa K."/>
            <person name="Okumura K."/>
            <person name="Nagase T."/>
            <person name="Nomura N."/>
            <person name="Kikuchi H."/>
            <person name="Masuho Y."/>
            <person name="Yamashita R."/>
            <person name="Nakai K."/>
            <person name="Yada T."/>
            <person name="Nakamura Y."/>
            <person name="Ohara O."/>
            <person name="Isogai T."/>
            <person name="Sugano S."/>
        </authorList>
    </citation>
    <scope>NUCLEOTIDE SEQUENCE [LARGE SCALE MRNA] (ISOFORMS 1 AND 2)</scope>
    <source>
        <tissue>Cerebellum</tissue>
        <tissue>Teratocarcinoma</tissue>
    </source>
</reference>
<reference key="3">
    <citation type="submission" date="2004-06" db="EMBL/GenBank/DDBJ databases">
        <title>Cloning of human full open reading frames in Gateway(TM) system entry vector (pDONR201).</title>
        <authorList>
            <person name="Ebert L."/>
            <person name="Schick M."/>
            <person name="Neubert P."/>
            <person name="Schatten R."/>
            <person name="Henze S."/>
            <person name="Korn B."/>
        </authorList>
    </citation>
    <scope>NUCLEOTIDE SEQUENCE [LARGE SCALE MRNA] (ISOFORM 1)</scope>
</reference>
<reference key="4">
    <citation type="journal article" date="2005" name="Nature">
        <title>DNA sequence and analysis of human chromosome 18.</title>
        <authorList>
            <person name="Nusbaum C."/>
            <person name="Zody M.C."/>
            <person name="Borowsky M.L."/>
            <person name="Kamal M."/>
            <person name="Kodira C.D."/>
            <person name="Taylor T.D."/>
            <person name="Whittaker C.A."/>
            <person name="Chang J.L."/>
            <person name="Cuomo C.A."/>
            <person name="Dewar K."/>
            <person name="FitzGerald M.G."/>
            <person name="Yang X."/>
            <person name="Abouelleil A."/>
            <person name="Allen N.R."/>
            <person name="Anderson S."/>
            <person name="Bloom T."/>
            <person name="Bugalter B."/>
            <person name="Butler J."/>
            <person name="Cook A."/>
            <person name="DeCaprio D."/>
            <person name="Engels R."/>
            <person name="Garber M."/>
            <person name="Gnirke A."/>
            <person name="Hafez N."/>
            <person name="Hall J.L."/>
            <person name="Norman C.H."/>
            <person name="Itoh T."/>
            <person name="Jaffe D.B."/>
            <person name="Kuroki Y."/>
            <person name="Lehoczky J."/>
            <person name="Lui A."/>
            <person name="Macdonald P."/>
            <person name="Mauceli E."/>
            <person name="Mikkelsen T.S."/>
            <person name="Naylor J.W."/>
            <person name="Nicol R."/>
            <person name="Nguyen C."/>
            <person name="Noguchi H."/>
            <person name="O'Leary S.B."/>
            <person name="Piqani B."/>
            <person name="Smith C.L."/>
            <person name="Talamas J.A."/>
            <person name="Topham K."/>
            <person name="Totoki Y."/>
            <person name="Toyoda A."/>
            <person name="Wain H.M."/>
            <person name="Young S.K."/>
            <person name="Zeng Q."/>
            <person name="Zimmer A.R."/>
            <person name="Fujiyama A."/>
            <person name="Hattori M."/>
            <person name="Birren B.W."/>
            <person name="Sakaki Y."/>
            <person name="Lander E.S."/>
        </authorList>
    </citation>
    <scope>NUCLEOTIDE SEQUENCE [LARGE SCALE GENOMIC DNA]</scope>
</reference>
<reference key="5">
    <citation type="submission" date="2005-07" db="EMBL/GenBank/DDBJ databases">
        <authorList>
            <person name="Mural R.J."/>
            <person name="Istrail S."/>
            <person name="Sutton G.G."/>
            <person name="Florea L."/>
            <person name="Halpern A.L."/>
            <person name="Mobarry C.M."/>
            <person name="Lippert R."/>
            <person name="Walenz B."/>
            <person name="Shatkay H."/>
            <person name="Dew I."/>
            <person name="Miller J.R."/>
            <person name="Flanigan M.J."/>
            <person name="Edwards N.J."/>
            <person name="Bolanos R."/>
            <person name="Fasulo D."/>
            <person name="Halldorsson B.V."/>
            <person name="Hannenhalli S."/>
            <person name="Turner R."/>
            <person name="Yooseph S."/>
            <person name="Lu F."/>
            <person name="Nusskern D.R."/>
            <person name="Shue B.C."/>
            <person name="Zheng X.H."/>
            <person name="Zhong F."/>
            <person name="Delcher A.L."/>
            <person name="Huson D.H."/>
            <person name="Kravitz S.A."/>
            <person name="Mouchard L."/>
            <person name="Reinert K."/>
            <person name="Remington K.A."/>
            <person name="Clark A.G."/>
            <person name="Waterman M.S."/>
            <person name="Eichler E.E."/>
            <person name="Adams M.D."/>
            <person name="Hunkapiller M.W."/>
            <person name="Myers E.W."/>
            <person name="Venter J.C."/>
        </authorList>
    </citation>
    <scope>NUCLEOTIDE SEQUENCE [LARGE SCALE GENOMIC DNA]</scope>
</reference>
<reference key="6">
    <citation type="journal article" date="2004" name="Genome Res.">
        <title>The status, quality, and expansion of the NIH full-length cDNA project: the Mammalian Gene Collection (MGC).</title>
        <authorList>
            <consortium name="The MGC Project Team"/>
        </authorList>
    </citation>
    <scope>NUCLEOTIDE SEQUENCE [LARGE SCALE MRNA] (ISOFORM 1)</scope>
</reference>
<protein>
    <recommendedName>
        <fullName evidence="6">Alpha-2,8-sialyltransferase 8E</fullName>
        <ecNumber evidence="4">2.4.99.-</ecNumber>
    </recommendedName>
    <alternativeName>
        <fullName>Sialyltransferase 8E</fullName>
        <shortName>SIAT8-E</shortName>
    </alternativeName>
    <alternativeName>
        <fullName>Sialyltransferase St8Sia V</fullName>
        <shortName>ST8SiaV</shortName>
    </alternativeName>
</protein>
<dbReference type="EC" id="2.4.99.-" evidence="4"/>
<dbReference type="EMBL" id="U91641">
    <property type="protein sequence ID" value="AAC51727.1"/>
    <property type="molecule type" value="mRNA"/>
</dbReference>
<dbReference type="EMBL" id="AK056270">
    <property type="protein sequence ID" value="BAG51661.1"/>
    <property type="molecule type" value="mRNA"/>
</dbReference>
<dbReference type="EMBL" id="AK293608">
    <property type="protein sequence ID" value="BAH11545.1"/>
    <property type="molecule type" value="mRNA"/>
</dbReference>
<dbReference type="EMBL" id="CR457037">
    <property type="protein sequence ID" value="CAG33318.1"/>
    <property type="molecule type" value="mRNA"/>
</dbReference>
<dbReference type="EMBL" id="AC064800">
    <property type="status" value="NOT_ANNOTATED_CDS"/>
    <property type="molecule type" value="Genomic_DNA"/>
</dbReference>
<dbReference type="EMBL" id="AC090241">
    <property type="status" value="NOT_ANNOTATED_CDS"/>
    <property type="molecule type" value="Genomic_DNA"/>
</dbReference>
<dbReference type="EMBL" id="AC090311">
    <property type="status" value="NOT_ANNOTATED_CDS"/>
    <property type="molecule type" value="Genomic_DNA"/>
</dbReference>
<dbReference type="EMBL" id="CH471088">
    <property type="protein sequence ID" value="EAX01483.1"/>
    <property type="molecule type" value="Genomic_DNA"/>
</dbReference>
<dbReference type="EMBL" id="BC108910">
    <property type="protein sequence ID" value="AAI08911.1"/>
    <property type="molecule type" value="mRNA"/>
</dbReference>
<dbReference type="EMBL" id="BC108911">
    <property type="protein sequence ID" value="AAI08912.1"/>
    <property type="molecule type" value="mRNA"/>
</dbReference>
<dbReference type="CCDS" id="CCDS11930.1">
    <molecule id="O15466-1"/>
</dbReference>
<dbReference type="CCDS" id="CCDS77184.1">
    <molecule id="O15466-2"/>
</dbReference>
<dbReference type="PIR" id="JC5600">
    <property type="entry name" value="JC5600"/>
</dbReference>
<dbReference type="RefSeq" id="NP_001294915.1">
    <molecule id="O15466-2"/>
    <property type="nucleotide sequence ID" value="NM_001307986.2"/>
</dbReference>
<dbReference type="RefSeq" id="NP_001294916.1">
    <property type="nucleotide sequence ID" value="NM_001307987.1"/>
</dbReference>
<dbReference type="RefSeq" id="NP_037437.2">
    <molecule id="O15466-1"/>
    <property type="nucleotide sequence ID" value="NM_013305.5"/>
</dbReference>
<dbReference type="SMR" id="O15466"/>
<dbReference type="BioGRID" id="118954">
    <property type="interactions" value="63"/>
</dbReference>
<dbReference type="FunCoup" id="O15466">
    <property type="interactions" value="167"/>
</dbReference>
<dbReference type="IntAct" id="O15466">
    <property type="interactions" value="47"/>
</dbReference>
<dbReference type="STRING" id="9606.ENSP00000445492"/>
<dbReference type="SwissLipids" id="SLP:000001361">
    <molecule id="O15466-1"/>
</dbReference>
<dbReference type="CAZy" id="GT29">
    <property type="family name" value="Glycosyltransferase Family 29"/>
</dbReference>
<dbReference type="GlyCosmos" id="O15466">
    <property type="glycosylation" value="4 sites, No reported glycans"/>
</dbReference>
<dbReference type="GlyGen" id="O15466">
    <property type="glycosylation" value="5 sites, 1 O-linked glycan (1 site)"/>
</dbReference>
<dbReference type="iPTMnet" id="O15466"/>
<dbReference type="PhosphoSitePlus" id="O15466"/>
<dbReference type="BioMuta" id="ST8SIA5"/>
<dbReference type="MassIVE" id="O15466"/>
<dbReference type="PaxDb" id="9606-ENSP00000321343"/>
<dbReference type="PeptideAtlas" id="O15466"/>
<dbReference type="ProteomicsDB" id="48682">
    <molecule id="O15466-1"/>
</dbReference>
<dbReference type="ProteomicsDB" id="6343"/>
<dbReference type="Antibodypedia" id="54885">
    <property type="antibodies" value="38 antibodies from 10 providers"/>
</dbReference>
<dbReference type="DNASU" id="29906"/>
<dbReference type="Ensembl" id="ENST00000315087.12">
    <molecule id="O15466-1"/>
    <property type="protein sequence ID" value="ENSP00000321343.6"/>
    <property type="gene ID" value="ENSG00000101638.14"/>
</dbReference>
<dbReference type="Ensembl" id="ENST00000538168.5">
    <molecule id="O15466-2"/>
    <property type="protein sequence ID" value="ENSP00000445492.1"/>
    <property type="gene ID" value="ENSG00000101638.14"/>
</dbReference>
<dbReference type="GeneID" id="29906"/>
<dbReference type="KEGG" id="hsa:29906"/>
<dbReference type="MANE-Select" id="ENST00000315087.12">
    <property type="protein sequence ID" value="ENSP00000321343.6"/>
    <property type="RefSeq nucleotide sequence ID" value="NM_013305.6"/>
    <property type="RefSeq protein sequence ID" value="NP_037437.2"/>
</dbReference>
<dbReference type="UCSC" id="uc002lcj.2">
    <molecule id="O15466-1"/>
    <property type="organism name" value="human"/>
</dbReference>
<dbReference type="AGR" id="HGNC:17827"/>
<dbReference type="CTD" id="29906"/>
<dbReference type="DisGeNET" id="29906"/>
<dbReference type="GeneCards" id="ST8SIA5"/>
<dbReference type="HGNC" id="HGNC:17827">
    <property type="gene designation" value="ST8SIA5"/>
</dbReference>
<dbReference type="HPA" id="ENSG00000101638">
    <property type="expression patterns" value="Tissue enhanced (adrenal gland, brain)"/>
</dbReference>
<dbReference type="MIM" id="607162">
    <property type="type" value="gene"/>
</dbReference>
<dbReference type="neXtProt" id="NX_O15466"/>
<dbReference type="OpenTargets" id="ENSG00000101638"/>
<dbReference type="PharmGKB" id="PA38249"/>
<dbReference type="VEuPathDB" id="HostDB:ENSG00000101638"/>
<dbReference type="eggNOG" id="KOG2692">
    <property type="taxonomic scope" value="Eukaryota"/>
</dbReference>
<dbReference type="GeneTree" id="ENSGT01030000234535"/>
<dbReference type="InParanoid" id="O15466"/>
<dbReference type="OMA" id="MFICAFG"/>
<dbReference type="OrthoDB" id="10264956at2759"/>
<dbReference type="PAN-GO" id="O15466">
    <property type="GO annotations" value="4 GO annotations based on evolutionary models"/>
</dbReference>
<dbReference type="PhylomeDB" id="O15466"/>
<dbReference type="TreeFam" id="TF323961"/>
<dbReference type="BRENDA" id="2.4.99.8">
    <property type="organism ID" value="2681"/>
</dbReference>
<dbReference type="PathwayCommons" id="O15466"/>
<dbReference type="Reactome" id="R-HSA-4085001">
    <property type="pathway name" value="Sialic acid metabolism"/>
</dbReference>
<dbReference type="Reactome" id="R-HSA-9840309">
    <property type="pathway name" value="Glycosphingolipid biosynthesis"/>
</dbReference>
<dbReference type="SignaLink" id="O15466"/>
<dbReference type="UniPathway" id="UPA00378"/>
<dbReference type="BioGRID-ORCS" id="29906">
    <property type="hits" value="13 hits in 1144 CRISPR screens"/>
</dbReference>
<dbReference type="ChiTaRS" id="ST8SIA5">
    <property type="organism name" value="human"/>
</dbReference>
<dbReference type="GenomeRNAi" id="29906"/>
<dbReference type="Pharos" id="O15466">
    <property type="development level" value="Tdark"/>
</dbReference>
<dbReference type="PRO" id="PR:O15466"/>
<dbReference type="Proteomes" id="UP000005640">
    <property type="component" value="Chromosome 18"/>
</dbReference>
<dbReference type="RNAct" id="O15466">
    <property type="molecule type" value="protein"/>
</dbReference>
<dbReference type="Bgee" id="ENSG00000101638">
    <property type="expression patterns" value="Expressed in endothelial cell and 135 other cell types or tissues"/>
</dbReference>
<dbReference type="ExpressionAtlas" id="O15466">
    <property type="expression patterns" value="baseline and differential"/>
</dbReference>
<dbReference type="GO" id="GO:0000139">
    <property type="term" value="C:Golgi membrane"/>
    <property type="evidence" value="ECO:0000250"/>
    <property type="project" value="UniProtKB"/>
</dbReference>
<dbReference type="GO" id="GO:0003828">
    <property type="term" value="F:alpha-N-acetylneuraminate alpha-2,8-sialyltransferase activity"/>
    <property type="evidence" value="ECO:0000318"/>
    <property type="project" value="GO_Central"/>
</dbReference>
<dbReference type="GO" id="GO:0008373">
    <property type="term" value="F:sialyltransferase activity"/>
    <property type="evidence" value="ECO:0000250"/>
    <property type="project" value="UniProtKB"/>
</dbReference>
<dbReference type="GO" id="GO:0005975">
    <property type="term" value="P:carbohydrate metabolic process"/>
    <property type="evidence" value="ECO:0000304"/>
    <property type="project" value="ProtInc"/>
</dbReference>
<dbReference type="GO" id="GO:0006688">
    <property type="term" value="P:glycosphingolipid biosynthetic process"/>
    <property type="evidence" value="ECO:0000250"/>
    <property type="project" value="UniProtKB"/>
</dbReference>
<dbReference type="GO" id="GO:0006491">
    <property type="term" value="P:N-glycan processing"/>
    <property type="evidence" value="ECO:0000318"/>
    <property type="project" value="GO_Central"/>
</dbReference>
<dbReference type="GO" id="GO:0009311">
    <property type="term" value="P:oligosaccharide metabolic process"/>
    <property type="evidence" value="ECO:0000318"/>
    <property type="project" value="GO_Central"/>
</dbReference>
<dbReference type="GO" id="GO:0006486">
    <property type="term" value="P:protein glycosylation"/>
    <property type="evidence" value="ECO:0000318"/>
    <property type="project" value="GO_Central"/>
</dbReference>
<dbReference type="CDD" id="cd23990">
    <property type="entry name" value="GT29_ST8SIA5"/>
    <property type="match status" value="1"/>
</dbReference>
<dbReference type="FunFam" id="3.90.1480.20:FF:000004">
    <property type="entry name" value="alpha-2,8-sialyltransferase 8E isoform X1"/>
    <property type="match status" value="1"/>
</dbReference>
<dbReference type="Gene3D" id="3.90.1480.20">
    <property type="entry name" value="Glycosyl transferase family 29"/>
    <property type="match status" value="1"/>
</dbReference>
<dbReference type="InterPro" id="IPR001675">
    <property type="entry name" value="Glyco_trans_29"/>
</dbReference>
<dbReference type="InterPro" id="IPR050943">
    <property type="entry name" value="Glycosyltr_29_Sialyltrsf"/>
</dbReference>
<dbReference type="InterPro" id="IPR038578">
    <property type="entry name" value="GT29-like_sf"/>
</dbReference>
<dbReference type="InterPro" id="IPR012163">
    <property type="entry name" value="Sialyl_trans"/>
</dbReference>
<dbReference type="PANTHER" id="PTHR11987">
    <property type="entry name" value="ALPHA-2,8-SIALYLTRANSFERASE"/>
    <property type="match status" value="1"/>
</dbReference>
<dbReference type="PANTHER" id="PTHR11987:SF4">
    <property type="entry name" value="ALPHA-2,8-SIALYLTRANSFERASE 8E"/>
    <property type="match status" value="1"/>
</dbReference>
<dbReference type="Pfam" id="PF00777">
    <property type="entry name" value="Glyco_transf_29"/>
    <property type="match status" value="1"/>
</dbReference>
<dbReference type="PIRSF" id="PIRSF005557">
    <property type="entry name" value="Sialyl_trans"/>
    <property type="match status" value="1"/>
</dbReference>
<organism>
    <name type="scientific">Homo sapiens</name>
    <name type="common">Human</name>
    <dbReference type="NCBI Taxonomy" id="9606"/>
    <lineage>
        <taxon>Eukaryota</taxon>
        <taxon>Metazoa</taxon>
        <taxon>Chordata</taxon>
        <taxon>Craniata</taxon>
        <taxon>Vertebrata</taxon>
        <taxon>Euteleostomi</taxon>
        <taxon>Mammalia</taxon>
        <taxon>Eutheria</taxon>
        <taxon>Euarchontoglires</taxon>
        <taxon>Primates</taxon>
        <taxon>Haplorrhini</taxon>
        <taxon>Catarrhini</taxon>
        <taxon>Hominidae</taxon>
        <taxon>Homo</taxon>
    </lineage>
</organism>
<comment type="function">
    <text evidence="4">Involved in the synthesis of gangliosides GD1c, GT1a, GQ1b, GP1c and GT3 from GD1a, GT1b, GM1b and GD3 respectively.</text>
</comment>
<comment type="catalytic activity">
    <molecule>Isoform 1</molecule>
    <reaction evidence="4">
        <text>a ganglioside GT1b (d18:1(4E)) + CMP-N-acetyl-beta-neuraminate = a ganglioside GQ1b (d18:1(4E)) + CMP + H(+)</text>
        <dbReference type="Rhea" id="RHEA:41772"/>
        <dbReference type="ChEBI" id="CHEBI:15378"/>
        <dbReference type="ChEBI" id="CHEBI:57812"/>
        <dbReference type="ChEBI" id="CHEBI:60377"/>
        <dbReference type="ChEBI" id="CHEBI:78452"/>
        <dbReference type="ChEBI" id="CHEBI:78455"/>
    </reaction>
    <physiologicalReaction direction="left-to-right" evidence="4">
        <dbReference type="Rhea" id="RHEA:41773"/>
    </physiologicalReaction>
</comment>
<comment type="catalytic activity">
    <molecule>Isoform 1</molecule>
    <reaction evidence="4">
        <text>a ganglioside GD3 (d18:1(4E)) + CMP-N-acetyl-beta-neuraminate = a ganglioside GT3 (d18:1(4E)) + CMP + H(+)</text>
        <dbReference type="Rhea" id="RHEA:41764"/>
        <dbReference type="ChEBI" id="CHEBI:15378"/>
        <dbReference type="ChEBI" id="CHEBI:57812"/>
        <dbReference type="ChEBI" id="CHEBI:60377"/>
        <dbReference type="ChEBI" id="CHEBI:78436"/>
        <dbReference type="ChEBI" id="CHEBI:78438"/>
    </reaction>
    <physiologicalReaction direction="left-to-right" evidence="4">
        <dbReference type="Rhea" id="RHEA:41765"/>
    </physiologicalReaction>
</comment>
<comment type="catalytic activity">
    <molecule>Isoform 1</molecule>
    <reaction evidence="4">
        <text>a ganglioside GD1a (d18:1(4E)) + CMP-N-acetyl-beta-neuraminate = a ganglioside GT1a (d18:1(4E)) + CMP + H(+)</text>
        <dbReference type="Rhea" id="RHEA:41768"/>
        <dbReference type="ChEBI" id="CHEBI:15378"/>
        <dbReference type="ChEBI" id="CHEBI:57812"/>
        <dbReference type="ChEBI" id="CHEBI:60377"/>
        <dbReference type="ChEBI" id="CHEBI:78445"/>
        <dbReference type="ChEBI" id="CHEBI:78447"/>
    </reaction>
    <physiologicalReaction direction="left-to-right" evidence="4">
        <dbReference type="Rhea" id="RHEA:41769"/>
    </physiologicalReaction>
</comment>
<comment type="catalytic activity">
    <molecule>Isoform 1</molecule>
    <reaction evidence="4">
        <text>a ganglioside GM1b (d18:1(4E)) + CMP-N-acetyl-beta-neuraminate = a ganglioside GD1c (d18:1(4E)) + CMP + H(+)</text>
        <dbReference type="Rhea" id="RHEA:47576"/>
        <dbReference type="ChEBI" id="CHEBI:15378"/>
        <dbReference type="ChEBI" id="CHEBI:57812"/>
        <dbReference type="ChEBI" id="CHEBI:60377"/>
        <dbReference type="ChEBI" id="CHEBI:78568"/>
        <dbReference type="ChEBI" id="CHEBI:87787"/>
    </reaction>
    <physiologicalReaction direction="left-to-right" evidence="4">
        <dbReference type="Rhea" id="RHEA:47577"/>
    </physiologicalReaction>
</comment>
<comment type="catalytic activity">
    <reaction evidence="2">
        <text>a ganglioside GQ1c (d18:1(4E)) + CMP-N-acetyl-beta-neuraminate = a ganglioside GP1c (d18:1(4E)) + CMP + H(+)</text>
        <dbReference type="Rhea" id="RHEA:47592"/>
        <dbReference type="ChEBI" id="CHEBI:15378"/>
        <dbReference type="ChEBI" id="CHEBI:57812"/>
        <dbReference type="ChEBI" id="CHEBI:60377"/>
        <dbReference type="ChEBI" id="CHEBI:87791"/>
        <dbReference type="ChEBI" id="CHEBI:87792"/>
    </reaction>
    <physiologicalReaction direction="left-to-right" evidence="2">
        <dbReference type="Rhea" id="RHEA:47593"/>
    </physiologicalReaction>
</comment>
<comment type="pathway">
    <text evidence="4">Protein modification; protein glycosylation.</text>
</comment>
<comment type="interaction">
    <interactant intactId="EBI-10182857">
        <id>O15466</id>
    </interactant>
    <interactant intactId="EBI-743771">
        <id>Q92624</id>
        <label>APPBP2</label>
    </interactant>
    <organismsDiffer>false</organismsDiffer>
    <experiments>3</experiments>
</comment>
<comment type="interaction">
    <interactant intactId="EBI-10182857">
        <id>O15466</id>
    </interactant>
    <interactant intactId="EBI-1751965">
        <id>Q9NZV5</id>
        <label>SELENON</label>
    </interactant>
    <organismsDiffer>false</organismsDiffer>
    <experiments>2</experiments>
</comment>
<comment type="subcellular location">
    <subcellularLocation>
        <location evidence="2">Golgi apparatus membrane</location>
        <topology evidence="3">Single-pass type II membrane protein</topology>
    </subcellularLocation>
</comment>
<comment type="alternative products">
    <event type="alternative splicing"/>
    <isoform>
        <id>O15466-1</id>
        <name>1</name>
        <sequence type="displayed"/>
    </isoform>
    <isoform>
        <id>O15466-2</id>
        <name>2</name>
        <sequence type="described" ref="VSP_056664"/>
    </isoform>
</comment>
<comment type="tissue specificity">
    <molecule>Isoform 1</molecule>
    <text evidence="4">Expressed in fetal and adult brain, adult heart and skeletal muscle.</text>
</comment>
<comment type="tissue specificity">
    <molecule>Isoform 2</molecule>
    <text evidence="4">Expressed in fetal and adult brain, not detected in adult heart and skeletal muscle.</text>
</comment>
<comment type="similarity">
    <text evidence="6">Belongs to the glycosyltransferase 29 family.</text>
</comment>
<comment type="online information" name="Functional Glycomics Gateway - GTase">
    <link uri="http://www.functionalglycomics.org/glycomics/molecule/jsp/glycoEnzyme/viewGlycoEnzyme.jsp?gbpId=gt_hum_640"/>
    <text>ST8Sia V</text>
</comment>
<accession>O15466</accession>
<accession>B7Z1K9</accession>
<accession>Q6IAW7</accession>
<evidence type="ECO:0000250" key="1">
    <source>
        <dbReference type="UniProtKB" id="O43173"/>
    </source>
</evidence>
<evidence type="ECO:0000250" key="2">
    <source>
        <dbReference type="UniProtKB" id="Q6ZXC8"/>
    </source>
</evidence>
<evidence type="ECO:0000255" key="3"/>
<evidence type="ECO:0000269" key="4">
    <source>
    </source>
</evidence>
<evidence type="ECO:0000303" key="5">
    <source>
    </source>
</evidence>
<evidence type="ECO:0000305" key="6"/>
<evidence type="ECO:0000312" key="7">
    <source>
        <dbReference type="HGNC" id="HGNC:17827"/>
    </source>
</evidence>
<proteinExistence type="evidence at protein level"/>
<feature type="chain" id="PRO_0000149296" description="Alpha-2,8-sialyltransferase 8E">
    <location>
        <begin position="1"/>
        <end position="376"/>
    </location>
</feature>
<feature type="topological domain" description="Cytoplasmic" evidence="3">
    <location>
        <begin position="1"/>
        <end position="17"/>
    </location>
</feature>
<feature type="transmembrane region" description="Helical; Signal-anchor for type II membrane protein" evidence="3">
    <location>
        <begin position="18"/>
        <end position="38"/>
    </location>
</feature>
<feature type="topological domain" description="Lumenal" evidence="3">
    <location>
        <begin position="39"/>
        <end position="376"/>
    </location>
</feature>
<feature type="active site" description="Proton donor/acceptor" evidence="1">
    <location>
        <position position="348"/>
    </location>
</feature>
<feature type="binding site" evidence="1">
    <location>
        <position position="192"/>
    </location>
    <ligand>
        <name>substrate</name>
    </ligand>
</feature>
<feature type="binding site" evidence="1">
    <location>
        <begin position="214"/>
        <end position="216"/>
    </location>
    <ligand>
        <name>substrate</name>
    </ligand>
</feature>
<feature type="binding site" evidence="1">
    <location>
        <begin position="300"/>
        <end position="302"/>
    </location>
    <ligand>
        <name>substrate</name>
    </ligand>
</feature>
<feature type="glycosylation site" description="N-linked (GlcNAc...) asparagine" evidence="3">
    <location>
        <position position="56"/>
    </location>
</feature>
<feature type="glycosylation site" description="N-linked (GlcNAc...) asparagine" evidence="3">
    <location>
        <position position="96"/>
    </location>
</feature>
<feature type="glycosylation site" description="N-linked (GlcNAc...) asparagine" evidence="3">
    <location>
        <position position="241"/>
    </location>
</feature>
<feature type="glycosylation site" description="N-linked (GlcNAc...) asparagine" evidence="3">
    <location>
        <position position="284"/>
    </location>
</feature>
<feature type="disulfide bond" evidence="1">
    <location>
        <begin position="164"/>
        <end position="313"/>
    </location>
</feature>
<feature type="disulfide bond" evidence="1">
    <location>
        <begin position="178"/>
        <end position="373"/>
    </location>
</feature>
<feature type="splice variant" id="VSP_056664" description="In isoform 2." evidence="5">
    <original>K</original>
    <variation>KRGLQFGWQSGDQLTNWTGLFNVTDDPAVQSGSDSSS</variation>
    <location>
        <position position="43"/>
    </location>
</feature>
<feature type="sequence conflict" description="In Ref. 1; AAC51727." evidence="6" ref="1">
    <original>A</original>
    <variation>P</variation>
    <location>
        <position position="8"/>
    </location>
</feature>
<feature type="sequence conflict" description="In Ref. 1; AAC51727." evidence="6" ref="1">
    <original>F</original>
    <variation>G</variation>
    <location>
        <position position="347"/>
    </location>
</feature>
<sequence>MRYADPSANRDLLGSRTLLFIFICAFALVTLLQQILYGRNYIKRYFEFYEGPFEYNSTRCLELRHEILEVKVLSMVKQSELFDRWKSLQMCKWAMNISEANQFKSTLSRCCNAPAFLFTTQKNTPLGTKLKYEVDTSGIYHINQEIFRMFPKDMPYYRSQFKKCAVVGNGGILKNSRCGREINSADFVFRCNLPPISEKYTMDVGVKTDVVTVNPSIITERFHKLEKWRRPFYRVLQVYENASVLLPAFYNTRNTDVSIRVKYVLDDFESPQAVYYFHPQYLVNVSRYWLSLGVRAKRISTGLILVTAALELCEEVHLFGFWAFPMNPSGLYITHHYYDNVKPRPGFHAMPSEIFNFLHLHSRGILRVHTGTCSCC</sequence>
<gene>
    <name evidence="7" type="primary">ST8SIA5</name>
    <name type="synonym">SIAT8E</name>
</gene>